<reference key="1">
    <citation type="journal article" date="1995" name="Plant Mol. Biol. Rep.">
        <title>Nucleotide sequence of the cyanelle DNA from Cyanophora paradoxa.</title>
        <authorList>
            <person name="Stirewalt V.L."/>
            <person name="Michalowski C.B."/>
            <person name="Loeffelhardt W."/>
            <person name="Bohnert H.J."/>
            <person name="Bryant D.A."/>
        </authorList>
    </citation>
    <scope>NUCLEOTIDE SEQUENCE [LARGE SCALE GENOMIC DNA]</scope>
    <source>
        <strain>UTEX LB 555 / Pringsheim</strain>
    </source>
</reference>
<reference key="2">
    <citation type="book" date="1997" name="Eukaryotism and symbiosis">
        <title>The complete sequence of the cyanelle genome of Cyanophora paradoxa: the genetic complexity of a primitive plastid.</title>
        <editorList>
            <person name="Schenk H.E.A."/>
            <person name="Herrmann R."/>
            <person name="Jeon K.W."/>
            <person name="Mueller N.E."/>
            <person name="Schwemmler W."/>
        </editorList>
        <authorList>
            <person name="Loeffelhardt W."/>
            <person name="Stirewalt V.L."/>
            <person name="Michalowski C.B."/>
            <person name="Annarella M."/>
            <person name="Farley J.Y."/>
            <person name="Schluchter W.M."/>
            <person name="Chung S."/>
            <person name="Newmann-Spallart C."/>
            <person name="Steiner J.M."/>
            <person name="Jakowitsch J."/>
            <person name="Bohnert H.J."/>
            <person name="Bryant D.A."/>
        </authorList>
    </citation>
    <scope>NUCLEOTIDE SEQUENCE [LARGE SCALE GENOMIC DNA]</scope>
    <source>
        <strain>UTEX LB 555 / Pringsheim</strain>
    </source>
</reference>
<keyword id="KW-0004">4Fe-4S</keyword>
<keyword id="KW-0067">ATP-binding</keyword>
<keyword id="KW-0149">Chlorophyll biosynthesis</keyword>
<keyword id="KW-0194">Cyanelle</keyword>
<keyword id="KW-0408">Iron</keyword>
<keyword id="KW-0411">Iron-sulfur</keyword>
<keyword id="KW-0479">Metal-binding</keyword>
<keyword id="KW-0547">Nucleotide-binding</keyword>
<keyword id="KW-0560">Oxidoreductase</keyword>
<keyword id="KW-0602">Photosynthesis</keyword>
<keyword id="KW-0934">Plastid</keyword>
<dbReference type="EC" id="1.3.7.7" evidence="1"/>
<dbReference type="EMBL" id="U30821">
    <property type="protein sequence ID" value="AAA81180.1"/>
    <property type="molecule type" value="Genomic_DNA"/>
</dbReference>
<dbReference type="PIR" id="T06837">
    <property type="entry name" value="T06837"/>
</dbReference>
<dbReference type="RefSeq" id="NP_043149.1">
    <property type="nucleotide sequence ID" value="NC_001675.1"/>
</dbReference>
<dbReference type="SMR" id="P48099"/>
<dbReference type="GeneID" id="801659"/>
<dbReference type="UniPathway" id="UPA00670"/>
<dbReference type="GO" id="GO:0009842">
    <property type="term" value="C:cyanelle"/>
    <property type="evidence" value="ECO:0007669"/>
    <property type="project" value="UniProtKB-SubCell"/>
</dbReference>
<dbReference type="GO" id="GO:0051539">
    <property type="term" value="F:4 iron, 4 sulfur cluster binding"/>
    <property type="evidence" value="ECO:0007669"/>
    <property type="project" value="UniProtKB-UniRule"/>
</dbReference>
<dbReference type="GO" id="GO:0005524">
    <property type="term" value="F:ATP binding"/>
    <property type="evidence" value="ECO:0007669"/>
    <property type="project" value="UniProtKB-UniRule"/>
</dbReference>
<dbReference type="GO" id="GO:0046872">
    <property type="term" value="F:metal ion binding"/>
    <property type="evidence" value="ECO:0007669"/>
    <property type="project" value="UniProtKB-KW"/>
</dbReference>
<dbReference type="GO" id="GO:0016730">
    <property type="term" value="F:oxidoreductase activity, acting on iron-sulfur proteins as donors"/>
    <property type="evidence" value="ECO:0007669"/>
    <property type="project" value="InterPro"/>
</dbReference>
<dbReference type="GO" id="GO:0016636">
    <property type="term" value="F:oxidoreductase activity, acting on the CH-CH group of donors, iron-sulfur protein as acceptor"/>
    <property type="evidence" value="ECO:0007669"/>
    <property type="project" value="UniProtKB-UniRule"/>
</dbReference>
<dbReference type="GO" id="GO:0036068">
    <property type="term" value="P:light-independent chlorophyll biosynthetic process"/>
    <property type="evidence" value="ECO:0007669"/>
    <property type="project" value="UniProtKB-UniPathway"/>
</dbReference>
<dbReference type="GO" id="GO:0019685">
    <property type="term" value="P:photosynthesis, dark reaction"/>
    <property type="evidence" value="ECO:0007669"/>
    <property type="project" value="InterPro"/>
</dbReference>
<dbReference type="CDD" id="cd01981">
    <property type="entry name" value="Pchlide_reductase_B"/>
    <property type="match status" value="1"/>
</dbReference>
<dbReference type="Gene3D" id="1.20.89.20">
    <property type="match status" value="1"/>
</dbReference>
<dbReference type="Gene3D" id="3.40.50.1980">
    <property type="entry name" value="Nitrogenase molybdenum iron protein domain"/>
    <property type="match status" value="3"/>
</dbReference>
<dbReference type="HAMAP" id="MF_00353">
    <property type="entry name" value="ChlB_BchB"/>
    <property type="match status" value="1"/>
</dbReference>
<dbReference type="InterPro" id="IPR050152">
    <property type="entry name" value="ChlB/BchB/BchZ"/>
</dbReference>
<dbReference type="InterPro" id="IPR000510">
    <property type="entry name" value="Nase/OxRdtase_comp1"/>
</dbReference>
<dbReference type="InterPro" id="IPR005969">
    <property type="entry name" value="Protochl_reductB"/>
</dbReference>
<dbReference type="InterPro" id="IPR016209">
    <property type="entry name" value="Protochlorophyllide_Rdtase"/>
</dbReference>
<dbReference type="NCBIfam" id="TIGR01278">
    <property type="entry name" value="DPOR_BchB"/>
    <property type="match status" value="1"/>
</dbReference>
<dbReference type="PANTHER" id="PTHR33712">
    <property type="entry name" value="LIGHT-INDEPENDENT PROTOCHLOROPHYLLIDE REDUCTASE SUBUNIT B"/>
    <property type="match status" value="1"/>
</dbReference>
<dbReference type="PANTHER" id="PTHR33712:SF7">
    <property type="entry name" value="LIGHT-INDEPENDENT PROTOCHLOROPHYLLIDE REDUCTASE SUBUNIT B"/>
    <property type="match status" value="1"/>
</dbReference>
<dbReference type="Pfam" id="PF00148">
    <property type="entry name" value="Oxidored_nitro"/>
    <property type="match status" value="1"/>
</dbReference>
<dbReference type="PIRSF" id="PIRSF000163">
    <property type="entry name" value="PCP_ChlB"/>
    <property type="match status" value="1"/>
</dbReference>
<dbReference type="SUPFAM" id="SSF53807">
    <property type="entry name" value="Helical backbone' metal receptor"/>
    <property type="match status" value="1"/>
</dbReference>
<sequence length="440" mass="50284">MKLAYWMYTGPAHIGTLRIASSFKNVHAIMHAPLGDDYFNVMRSMLERERNYTPVTTSVVDRNVLARGSQEKVIDNILRKDKEEQPDLIVLTPTCTSSILQEDLQNFVEQASLNSMADVLLADVNHYRINELQACDKTLEQIVRFYIEKNRASLTLEKVKTLLPSVNLIGISSLGFHNNHDTRELKKLFELYEIILNCSLPQGTTVKTLINLPKAWLNILPYRELGLLTSKYLNKEFGLLSLVILPMGNINLNRFLKKLLFSLKLENNTITKVINIKLLKLLNLNWIKKEAIKSKLKRKKAIIFGSSNHVATLTKLLSKEIGLEIILCGTYCKSESKWFSEQVQNYCNKILITEDHTMISNEISKLKPDVIFGTQMERHIGKRLGIPCGVISSPIHIQNFPLSYKPMVGYEGVKTIMDLLFNSLNLKDRKNSFTLFNEII</sequence>
<accession>P48099</accession>
<proteinExistence type="inferred from homology"/>
<name>CHLB_CYAPA</name>
<evidence type="ECO:0000255" key="1">
    <source>
        <dbReference type="HAMAP-Rule" id="MF_00353"/>
    </source>
</evidence>
<organism>
    <name type="scientific">Cyanophora paradoxa</name>
    <dbReference type="NCBI Taxonomy" id="2762"/>
    <lineage>
        <taxon>Eukaryota</taxon>
        <taxon>Glaucocystophyceae</taxon>
        <taxon>Cyanophoraceae</taxon>
        <taxon>Cyanophora</taxon>
    </lineage>
</organism>
<comment type="function">
    <text evidence="1">Component of the dark-operative protochlorophyllide reductase (DPOR) that uses Mg-ATP and reduced ferredoxin to reduce ring D of protochlorophyllide (Pchlide) to form chlorophyllide a (Chlide). This reaction is light-independent. The NB-protein (ChlN-ChlB) is the catalytic component of the complex.</text>
</comment>
<comment type="catalytic activity">
    <reaction evidence="1">
        <text>chlorophyllide a + oxidized 2[4Fe-4S]-[ferredoxin] + 2 ADP + 2 phosphate = protochlorophyllide a + reduced 2[4Fe-4S]-[ferredoxin] + 2 ATP + 2 H2O</text>
        <dbReference type="Rhea" id="RHEA:28202"/>
        <dbReference type="Rhea" id="RHEA-COMP:10002"/>
        <dbReference type="Rhea" id="RHEA-COMP:10004"/>
        <dbReference type="ChEBI" id="CHEBI:15377"/>
        <dbReference type="ChEBI" id="CHEBI:30616"/>
        <dbReference type="ChEBI" id="CHEBI:33722"/>
        <dbReference type="ChEBI" id="CHEBI:33723"/>
        <dbReference type="ChEBI" id="CHEBI:43474"/>
        <dbReference type="ChEBI" id="CHEBI:83348"/>
        <dbReference type="ChEBI" id="CHEBI:83350"/>
        <dbReference type="ChEBI" id="CHEBI:456216"/>
        <dbReference type="EC" id="1.3.7.7"/>
    </reaction>
</comment>
<comment type="cofactor">
    <cofactor evidence="1">
        <name>[4Fe-4S] cluster</name>
        <dbReference type="ChEBI" id="CHEBI:49883"/>
    </cofactor>
    <text evidence="1">Binds 1 [4Fe-4S] cluster per heterodimer. The cluster is bound at the heterodimer interface by residues from both subunits.</text>
</comment>
<comment type="pathway">
    <text evidence="1">Porphyrin-containing compound metabolism; chlorophyll biosynthesis (light-independent).</text>
</comment>
<comment type="subunit">
    <text evidence="1">Protochlorophyllide reductase is composed of three subunits; ChlL, ChlN and ChlB. Forms a heterotetramer of two ChlB and two ChlN subunits.</text>
</comment>
<comment type="subcellular location">
    <subcellularLocation>
        <location>Plastid</location>
        <location>Cyanelle</location>
    </subcellularLocation>
</comment>
<comment type="similarity">
    <text evidence="1">Belongs to the ChlB/BchB/BchZ family.</text>
</comment>
<feature type="chain" id="PRO_0000219820" description="Light-independent protochlorophyllide reductase subunit B">
    <location>
        <begin position="1"/>
        <end position="440"/>
    </location>
</feature>
<feature type="binding site" evidence="1">
    <location>
        <position position="36"/>
    </location>
    <ligand>
        <name>[4Fe-4S] cluster</name>
        <dbReference type="ChEBI" id="CHEBI:49883"/>
        <note>ligand shared with heterodimeric partner</note>
    </ligand>
</feature>
<feature type="binding site" evidence="1">
    <location>
        <begin position="427"/>
        <end position="428"/>
    </location>
    <ligand>
        <name>substrate</name>
    </ligand>
</feature>
<protein>
    <recommendedName>
        <fullName evidence="1">Light-independent protochlorophyllide reductase subunit B</fullName>
        <shortName evidence="1">DPOR subunit B</shortName>
        <shortName evidence="1">LI-POR subunit B</shortName>
        <ecNumber evidence="1">1.3.7.7</ecNumber>
    </recommendedName>
</protein>
<geneLocation type="cyanelle"/>
<gene>
    <name evidence="1" type="primary">chlB</name>
</gene>